<reference key="1">
    <citation type="journal article" date="1997" name="Biochim. Biophys. Acta">
        <title>Cloning, sequencing, and expression of dnaK-operon proteins from the thermophilic bacterium Thermus thermophilus.</title>
        <authorList>
            <person name="Osipiuk J."/>
            <person name="Joachimiak A."/>
        </authorList>
    </citation>
    <scope>NUCLEOTIDE SEQUENCE [GENOMIC DNA]</scope>
</reference>
<reference key="2">
    <citation type="journal article" date="1996" name="J. Biol. Chem.">
        <title>A novel factor required for the assembly of the DnaK and DnaJ chaperones of Thermus thermophilus.</title>
        <authorList>
            <person name="Motohashi K."/>
            <person name="Yohda M."/>
            <person name="Endo I."/>
            <person name="Yoshida M."/>
        </authorList>
    </citation>
    <scope>NUCLEOTIDE SEQUENCE [GENOMIC DNA]</scope>
</reference>
<reference key="3">
    <citation type="submission" date="1996-09" db="EMBL/GenBank/DDBJ databases">
        <authorList>
            <person name="Seidel R."/>
        </authorList>
    </citation>
    <scope>NUCLEOTIDE SEQUENCE [GENOMIC DNA]</scope>
</reference>
<reference key="4">
    <citation type="journal article" date="1997" name="FEBS Lett.">
        <title>K+ is an indispensable cofactor for GrpE stimulation of ATPase activity of DnaK/DnaJ complex from Thermus thermophilus.</title>
        <authorList>
            <person name="Motohashi K."/>
            <person name="Yohda M."/>
            <person name="Odaka M."/>
            <person name="Yoshida M."/>
        </authorList>
    </citation>
    <scope>NUCLEOTIDE SEQUENCE [GENOMIC DNA]</scope>
    <scope>PROTEIN SEQUENCE OF 1-8</scope>
    <scope>POTASSIUM REQUIREMENT</scope>
</reference>
<reference key="5">
    <citation type="submission" date="2004-11" db="EMBL/GenBank/DDBJ databases">
        <title>Complete genome sequence of Thermus thermophilus HB8.</title>
        <authorList>
            <person name="Masui R."/>
            <person name="Kurokawa K."/>
            <person name="Nakagawa N."/>
            <person name="Tokunaga F."/>
            <person name="Koyama Y."/>
            <person name="Shibata T."/>
            <person name="Oshima T."/>
            <person name="Yokoyama S."/>
            <person name="Yasunaga T."/>
            <person name="Kuramitsu S."/>
        </authorList>
    </citation>
    <scope>NUCLEOTIDE SEQUENCE [LARGE SCALE GENOMIC DNA]</scope>
    <source>
        <strain>ATCC 27634 / DSM 579 / HB8</strain>
    </source>
</reference>
<dbReference type="EMBL" id="L57504">
    <property type="protein sequence ID" value="AAB04677.1"/>
    <property type="molecule type" value="Genomic_DNA"/>
</dbReference>
<dbReference type="EMBL" id="D84222">
    <property type="protein sequence ID" value="BAA12281.1"/>
    <property type="molecule type" value="Genomic_DNA"/>
</dbReference>
<dbReference type="EMBL" id="Y07826">
    <property type="protein sequence ID" value="CAA69160.1"/>
    <property type="molecule type" value="Genomic_DNA"/>
</dbReference>
<dbReference type="EMBL" id="AB012390">
    <property type="protein sequence ID" value="BAA81742.1"/>
    <property type="molecule type" value="Genomic_DNA"/>
</dbReference>
<dbReference type="EMBL" id="AB032368">
    <property type="protein sequence ID" value="BAA96088.1"/>
    <property type="molecule type" value="Genomic_DNA"/>
</dbReference>
<dbReference type="EMBL" id="AP008226">
    <property type="protein sequence ID" value="BAD71313.1"/>
    <property type="molecule type" value="Genomic_DNA"/>
</dbReference>
<dbReference type="RefSeq" id="YP_144756.1">
    <property type="nucleotide sequence ID" value="NC_006461.1"/>
</dbReference>
<dbReference type="PDB" id="3A6M">
    <property type="method" value="X-ray"/>
    <property type="resolution" value="3.23 A"/>
    <property type="chains" value="A/B=1-177"/>
</dbReference>
<dbReference type="PDBsum" id="3A6M"/>
<dbReference type="SMR" id="Q56236"/>
<dbReference type="EnsemblBacteria" id="BAD71313">
    <property type="protein sequence ID" value="BAD71313"/>
    <property type="gene ID" value="BAD71313"/>
</dbReference>
<dbReference type="GeneID" id="3169984"/>
<dbReference type="KEGG" id="ttj:TTHA1490"/>
<dbReference type="PATRIC" id="fig|300852.9.peg.1465"/>
<dbReference type="eggNOG" id="COG0576">
    <property type="taxonomic scope" value="Bacteria"/>
</dbReference>
<dbReference type="HOGENOM" id="CLU_057217_6_3_0"/>
<dbReference type="PhylomeDB" id="Q56236"/>
<dbReference type="EvolutionaryTrace" id="Q56236"/>
<dbReference type="Proteomes" id="UP000000532">
    <property type="component" value="Chromosome"/>
</dbReference>
<dbReference type="GO" id="GO:0005737">
    <property type="term" value="C:cytoplasm"/>
    <property type="evidence" value="ECO:0007669"/>
    <property type="project" value="UniProtKB-SubCell"/>
</dbReference>
<dbReference type="GO" id="GO:0000774">
    <property type="term" value="F:adenyl-nucleotide exchange factor activity"/>
    <property type="evidence" value="ECO:0007669"/>
    <property type="project" value="InterPro"/>
</dbReference>
<dbReference type="GO" id="GO:0042803">
    <property type="term" value="F:protein homodimerization activity"/>
    <property type="evidence" value="ECO:0007669"/>
    <property type="project" value="InterPro"/>
</dbReference>
<dbReference type="GO" id="GO:0051087">
    <property type="term" value="F:protein-folding chaperone binding"/>
    <property type="evidence" value="ECO:0007669"/>
    <property type="project" value="InterPro"/>
</dbReference>
<dbReference type="GO" id="GO:0051082">
    <property type="term" value="F:unfolded protein binding"/>
    <property type="evidence" value="ECO:0007669"/>
    <property type="project" value="TreeGrafter"/>
</dbReference>
<dbReference type="GO" id="GO:0006457">
    <property type="term" value="P:protein folding"/>
    <property type="evidence" value="ECO:0007669"/>
    <property type="project" value="InterPro"/>
</dbReference>
<dbReference type="CDD" id="cd00446">
    <property type="entry name" value="GrpE"/>
    <property type="match status" value="1"/>
</dbReference>
<dbReference type="Gene3D" id="3.90.20.20">
    <property type="match status" value="1"/>
</dbReference>
<dbReference type="Gene3D" id="2.30.22.10">
    <property type="entry name" value="Head domain of nucleotide exchange factor GrpE"/>
    <property type="match status" value="1"/>
</dbReference>
<dbReference type="HAMAP" id="MF_01151">
    <property type="entry name" value="GrpE"/>
    <property type="match status" value="1"/>
</dbReference>
<dbReference type="InterPro" id="IPR000740">
    <property type="entry name" value="GrpE"/>
</dbReference>
<dbReference type="InterPro" id="IPR013805">
    <property type="entry name" value="GrpE_coiled_coil"/>
</dbReference>
<dbReference type="InterPro" id="IPR009012">
    <property type="entry name" value="GrpE_head"/>
</dbReference>
<dbReference type="PANTHER" id="PTHR21237">
    <property type="entry name" value="GRPE PROTEIN"/>
    <property type="match status" value="1"/>
</dbReference>
<dbReference type="PANTHER" id="PTHR21237:SF23">
    <property type="entry name" value="GRPE PROTEIN HOMOLOG, MITOCHONDRIAL"/>
    <property type="match status" value="1"/>
</dbReference>
<dbReference type="Pfam" id="PF01025">
    <property type="entry name" value="GrpE"/>
    <property type="match status" value="1"/>
</dbReference>
<dbReference type="PRINTS" id="PR00773">
    <property type="entry name" value="GRPEPROTEIN"/>
</dbReference>
<dbReference type="SUPFAM" id="SSF58014">
    <property type="entry name" value="Coiled-coil domain of nucleotide exchange factor GrpE"/>
    <property type="match status" value="1"/>
</dbReference>
<dbReference type="SUPFAM" id="SSF51064">
    <property type="entry name" value="Head domain of nucleotide exchange factor GrpE"/>
    <property type="match status" value="1"/>
</dbReference>
<dbReference type="PROSITE" id="PS01071">
    <property type="entry name" value="GRPE"/>
    <property type="match status" value="1"/>
</dbReference>
<protein>
    <recommendedName>
        <fullName evidence="1">Protein GrpE</fullName>
    </recommendedName>
    <alternativeName>
        <fullName evidence="1">HSP-70 cofactor</fullName>
    </alternativeName>
</protein>
<evidence type="ECO:0000255" key="1">
    <source>
        <dbReference type="HAMAP-Rule" id="MF_01151"/>
    </source>
</evidence>
<evidence type="ECO:0000305" key="2"/>
<evidence type="ECO:0007829" key="3">
    <source>
        <dbReference type="PDB" id="3A6M"/>
    </source>
</evidence>
<gene>
    <name evidence="1" type="primary">grpE</name>
    <name type="ordered locus">TTHA1490</name>
</gene>
<comment type="function">
    <text evidence="1">Participates actively in the response to hyperosmotic and heat shock by preventing the aggregation of stress-denatured proteins, in association with DnaK and GrpE. It is the nucleotide exchange factor for DnaK and may function as a thermosensor. Unfolded proteins bind initially to DnaJ; upon interaction with the DnaJ-bound protein, DnaK hydrolyzes its bound ATP, resulting in the formation of a stable complex. GrpE releases ADP from DnaK; ATP binding to DnaK triggers the release of the substrate protein, thus completing the reaction cycle. Several rounds of ATP-dependent interactions between DnaJ, DnaK and GrpE are required for fully efficient folding.</text>
</comment>
<comment type="cofactor">
    <cofactor>
        <name>K(+)</name>
        <dbReference type="ChEBI" id="CHEBI:29103"/>
    </cofactor>
    <text>Required to stimulate the ATPase activity of DnaK.</text>
</comment>
<comment type="subunit">
    <text evidence="1">Homodimer.</text>
</comment>
<comment type="subcellular location">
    <subcellularLocation>
        <location evidence="2">Cytoplasm</location>
    </subcellularLocation>
</comment>
<comment type="similarity">
    <text evidence="1">Belongs to the GrpE family.</text>
</comment>
<proteinExistence type="evidence at protein level"/>
<name>GRPE_THET8</name>
<sequence>MEERNHENTLEKDLEAVGQEAQALEERLKAAEEELKGLKDKYLRLLADFDNYRKRMEEELKAREREGVLKALRALLPVLDDLDRALEFAEASPESIRQGVRAIRDGFFRILAGLGVEEVPGEGEAFDPRYHEAVGLLPGEPGKVAKVFQRGFRMGEALVRPARVAVGEEKREEADLE</sequence>
<feature type="chain" id="PRO_0000113884" description="Protein GrpE">
    <location>
        <begin position="1"/>
        <end position="177"/>
    </location>
</feature>
<feature type="sequence conflict" description="In Ref. 2; BAA12281." evidence="2" ref="2">
    <original>GQEAQ</original>
    <variation>ARRPM</variation>
    <location>
        <begin position="18"/>
        <end position="22"/>
    </location>
</feature>
<feature type="turn" evidence="3">
    <location>
        <begin position="5"/>
        <end position="7"/>
    </location>
</feature>
<feature type="strand" evidence="3">
    <location>
        <begin position="8"/>
        <end position="10"/>
    </location>
</feature>
<feature type="helix" evidence="3">
    <location>
        <begin position="11"/>
        <end position="14"/>
    </location>
</feature>
<feature type="turn" evidence="3">
    <location>
        <begin position="15"/>
        <end position="17"/>
    </location>
</feature>
<feature type="helix" evidence="3">
    <location>
        <begin position="18"/>
        <end position="21"/>
    </location>
</feature>
<feature type="turn" evidence="3">
    <location>
        <begin position="24"/>
        <end position="26"/>
    </location>
</feature>
<feature type="helix" evidence="3">
    <location>
        <begin position="30"/>
        <end position="33"/>
    </location>
</feature>
<feature type="strand" evidence="3">
    <location>
        <begin position="35"/>
        <end position="37"/>
    </location>
</feature>
<feature type="helix" evidence="3">
    <location>
        <begin position="38"/>
        <end position="43"/>
    </location>
</feature>
<feature type="turn" evidence="3">
    <location>
        <begin position="44"/>
        <end position="51"/>
    </location>
</feature>
<feature type="helix" evidence="3">
    <location>
        <begin position="52"/>
        <end position="87"/>
    </location>
</feature>
<feature type="helix" evidence="3">
    <location>
        <begin position="89"/>
        <end position="91"/>
    </location>
</feature>
<feature type="helix" evidence="3">
    <location>
        <begin position="93"/>
        <end position="113"/>
    </location>
</feature>
<feature type="turn" evidence="3">
    <location>
        <begin position="128"/>
        <end position="130"/>
    </location>
</feature>
<feature type="strand" evidence="3">
    <location>
        <begin position="131"/>
        <end position="140"/>
    </location>
</feature>
<feature type="strand" evidence="3">
    <location>
        <begin position="143"/>
        <end position="149"/>
    </location>
</feature>
<feature type="strand" evidence="3">
    <location>
        <begin position="152"/>
        <end position="154"/>
    </location>
</feature>
<feature type="strand" evidence="3">
    <location>
        <begin position="157"/>
        <end position="160"/>
    </location>
</feature>
<feature type="strand" evidence="3">
    <location>
        <begin position="162"/>
        <end position="168"/>
    </location>
</feature>
<accession>Q56236</accession>
<accession>P74895</accession>
<accession>Q5SI84</accession>
<keyword id="KW-0002">3D-structure</keyword>
<keyword id="KW-0143">Chaperone</keyword>
<keyword id="KW-0963">Cytoplasm</keyword>
<keyword id="KW-0903">Direct protein sequencing</keyword>
<keyword id="KW-1185">Reference proteome</keyword>
<keyword id="KW-0346">Stress response</keyword>
<organism>
    <name type="scientific">Thermus thermophilus (strain ATCC 27634 / DSM 579 / HB8)</name>
    <dbReference type="NCBI Taxonomy" id="300852"/>
    <lineage>
        <taxon>Bacteria</taxon>
        <taxon>Thermotogati</taxon>
        <taxon>Deinococcota</taxon>
        <taxon>Deinococci</taxon>
        <taxon>Thermales</taxon>
        <taxon>Thermaceae</taxon>
        <taxon>Thermus</taxon>
    </lineage>
</organism>